<reference key="1">
    <citation type="journal article" date="2004" name="Proc. Natl. Acad. Sci. U.S.A.">
        <title>The diploid genome sequence of Candida albicans.</title>
        <authorList>
            <person name="Jones T."/>
            <person name="Federspiel N.A."/>
            <person name="Chibana H."/>
            <person name="Dungan J."/>
            <person name="Kalman S."/>
            <person name="Magee B.B."/>
            <person name="Newport G."/>
            <person name="Thorstenson Y.R."/>
            <person name="Agabian N."/>
            <person name="Magee P.T."/>
            <person name="Davis R.W."/>
            <person name="Scherer S."/>
        </authorList>
    </citation>
    <scope>NUCLEOTIDE SEQUENCE [LARGE SCALE GENOMIC DNA]</scope>
    <source>
        <strain>SC5314 / ATCC MYA-2876</strain>
    </source>
</reference>
<reference key="2">
    <citation type="journal article" date="2007" name="Genome Biol.">
        <title>Assembly of the Candida albicans genome into sixteen supercontigs aligned on the eight chromosomes.</title>
        <authorList>
            <person name="van het Hoog M."/>
            <person name="Rast T.J."/>
            <person name="Martchenko M."/>
            <person name="Grindle S."/>
            <person name="Dignard D."/>
            <person name="Hogues H."/>
            <person name="Cuomo C."/>
            <person name="Berriman M."/>
            <person name="Scherer S."/>
            <person name="Magee B.B."/>
            <person name="Whiteway M."/>
            <person name="Chibana H."/>
            <person name="Nantel A."/>
            <person name="Magee P.T."/>
        </authorList>
    </citation>
    <scope>GENOME REANNOTATION</scope>
    <source>
        <strain>SC5314 / ATCC MYA-2876</strain>
    </source>
</reference>
<reference key="3">
    <citation type="journal article" date="2013" name="Genome Biol.">
        <title>Assembly of a phased diploid Candida albicans genome facilitates allele-specific measurements and provides a simple model for repeat and indel structure.</title>
        <authorList>
            <person name="Muzzey D."/>
            <person name="Schwartz K."/>
            <person name="Weissman J.S."/>
            <person name="Sherlock G."/>
        </authorList>
    </citation>
    <scope>NUCLEOTIDE SEQUENCE [LARGE SCALE GENOMIC DNA]</scope>
    <scope>GENOME REANNOTATION</scope>
    <source>
        <strain>SC5314 / ATCC MYA-2876</strain>
    </source>
</reference>
<reference key="4">
    <citation type="journal article" date="2008" name="Mol. Biol. Cell">
        <title>Role of the RAM network in cell polarity and hyphal morphogenesis in Candida albicans.</title>
        <authorList>
            <person name="Song Y."/>
            <person name="Cheon S.A."/>
            <person name="Lee K.E."/>
            <person name="Lee S.Y."/>
            <person name="Lee B.K."/>
            <person name="Oh D.B."/>
            <person name="Kang H.A."/>
            <person name="Kim J.Y."/>
        </authorList>
    </citation>
    <scope>FUNCTION</scope>
    <scope>INTERACTION WITH CBK1</scope>
    <scope>DISRUPTION PHENOTYPE</scope>
</reference>
<reference key="5">
    <citation type="journal article" date="2011" name="Mol. Biol. Cell">
        <title>CDK-dependent phosphorylation of Mob2 is essential for hyphal development in Candida albicans.</title>
        <authorList>
            <person name="Gutierrez-Escribano P."/>
            <person name="Gonzalez-Novo A."/>
            <person name="Suarez M.B."/>
            <person name="Li C.R."/>
            <person name="Wang Y."/>
            <person name="de Aldana C.R."/>
            <person name="Correa-Bordes J."/>
        </authorList>
    </citation>
    <scope>SUBCELLULAR LOCATION</scope>
    <scope>FUNCTION</scope>
    <scope>PHOSPHORYLATION AT SER-44; SER-51; SER-67 AND SER-97</scope>
</reference>
<reference key="6">
    <citation type="journal article" date="2012" name="PLoS Pathog.">
        <title>The NDR/LATS kinase Cbk1 controls the activity of the transcriptional regulator Bcr1 during biofilm formation in Candida albicans.</title>
        <authorList>
            <person name="Gutierrez-Escribano P."/>
            <person name="Zeidler U."/>
            <person name="Suarez M.B."/>
            <person name="Bachellier-Bassi S."/>
            <person name="Clemente-Blanco A."/>
            <person name="Bonhomme J."/>
            <person name="Vazquez de Aldana C.R."/>
            <person name="d'Enfert C."/>
            <person name="Correa-Bordes J."/>
        </authorList>
    </citation>
    <scope>FUNCTION</scope>
</reference>
<gene>
    <name type="primary">MOB2</name>
    <name type="ordered locus">CAALFM_C100620WA</name>
    <name type="ORF">CaO19.13465</name>
    <name type="ORF">CaO19.6044</name>
</gene>
<proteinExistence type="evidence at protein level"/>
<keyword id="KW-0131">Cell cycle</keyword>
<keyword id="KW-0132">Cell division</keyword>
<keyword id="KW-0963">Cytoplasm</keyword>
<keyword id="KW-0498">Mitosis</keyword>
<keyword id="KW-0539">Nucleus</keyword>
<keyword id="KW-0597">Phosphoprotein</keyword>
<keyword id="KW-1185">Reference proteome</keyword>
<accession>Q5ABC6</accession>
<accession>A0A1D8PC95</accession>
<comment type="function">
    <text evidence="3 4 5">Functions as an activator subunit for the CBK1 protein kinase. Part of the regulation of ACE2 activity and cellular morphogenesis (RAM) signaling network. The RAM network is critically required for hyphal growth as well as normal vegetative growth, and for polarization of lipid rafts and the actin cytoskeleton. It play an essential role in biofilm formation. The RAM network also plays a role in serum- and antifungal azoles-induced activation of ergosterol biosynthesis genes, especially those involved in the late steps of ergosterol biosynthesis.</text>
</comment>
<comment type="subunit">
    <text evidence="3">Interacts with protein kinase CBK1 to form the RAM CBK1-MOB2 kinase complex.</text>
</comment>
<comment type="subcellular location">
    <subcellularLocation>
        <location evidence="1">Nucleus</location>
    </subcellularLocation>
    <subcellularLocation>
        <location evidence="1">Cytoplasm</location>
    </subcellularLocation>
    <text evidence="4">localizes to sites of polarized growth in both yeast and hyphal cells.</text>
</comment>
<comment type="PTM">
    <text evidence="4">Phosphorylated by CDC28 at Ser-44, Ser-51, Ser-67, and Ser-97. Phosphorylation occurs during bud emergence and is maintained until the G2/M transition. Dephosphorylated at the end of mitosis. Phosphorylation is required for the maintenance of polarisome components in hyphae.</text>
</comment>
<comment type="disruption phenotype">
    <text evidence="3">Leads to hypersensitivity to cell-wall- or membrane-perturbing agents, cell-separation defects, a multinucleate phenotype, and loss of cell polarity.</text>
</comment>
<comment type="similarity">
    <text evidence="6">Belongs to the MOB1/phocein family.</text>
</comment>
<feature type="chain" id="PRO_0000424372" description="CBK1 kinase activator protein MOB2">
    <location>
        <begin position="1"/>
        <end position="313"/>
    </location>
</feature>
<feature type="region of interest" description="Disordered" evidence="2">
    <location>
        <begin position="1"/>
        <end position="109"/>
    </location>
</feature>
<feature type="compositionally biased region" description="Polar residues" evidence="2">
    <location>
        <begin position="23"/>
        <end position="69"/>
    </location>
</feature>
<feature type="compositionally biased region" description="Low complexity" evidence="2">
    <location>
        <begin position="76"/>
        <end position="97"/>
    </location>
</feature>
<feature type="compositionally biased region" description="Polar residues" evidence="2">
    <location>
        <begin position="98"/>
        <end position="109"/>
    </location>
</feature>
<feature type="modified residue" description="Phosphoserine; by CDC28" evidence="4">
    <location>
        <position position="44"/>
    </location>
</feature>
<feature type="modified residue" description="Phosphoserine; by CDC28" evidence="4">
    <location>
        <position position="51"/>
    </location>
</feature>
<feature type="modified residue" description="Phosphoserine; by CDC28" evidence="4">
    <location>
        <position position="67"/>
    </location>
</feature>
<feature type="modified residue" description="Phosphoserine; by CDC28" evidence="4">
    <location>
        <position position="97"/>
    </location>
</feature>
<protein>
    <recommendedName>
        <fullName>CBK1 kinase activator protein MOB2</fullName>
    </recommendedName>
</protein>
<name>MOB2_CANAL</name>
<organism>
    <name type="scientific">Candida albicans (strain SC5314 / ATCC MYA-2876)</name>
    <name type="common">Yeast</name>
    <dbReference type="NCBI Taxonomy" id="237561"/>
    <lineage>
        <taxon>Eukaryota</taxon>
        <taxon>Fungi</taxon>
        <taxon>Dikarya</taxon>
        <taxon>Ascomycota</taxon>
        <taxon>Saccharomycotina</taxon>
        <taxon>Pichiomycetes</taxon>
        <taxon>Debaryomycetaceae</taxon>
        <taxon>Candida/Lodderomyces clade</taxon>
        <taxon>Candida</taxon>
    </lineage>
</organism>
<sequence>MSFLNTIRGLGRGSKKNKKDLEPSNNAIYSHSNLSGNGLRRTQSPTKFSPSKLSSKGAQGSAAYTSSPTKRSRTGQSLQHQDSQSSLQYQQQSGSVSPSKRSSIQTTKSTTVNADPPLFLCEPYVKTALVKGSFKTIVQLPKYVDYCEWLALNIFELFNHLNRFYGVIQEYATPEAYPTMNAGPNTNYLWVNSSGQAVNLPACQYIEYVITWVTNKLNDQSVFPTKNGGAFPPNFIKDCKNISRQMFRIFAHIYHNHFDKIIHLSLEAHWNSFFAHFISFVKEFNLIDRTEMEPLLPLIENFEQQGKITQASK</sequence>
<evidence type="ECO:0000250" key="1"/>
<evidence type="ECO:0000256" key="2">
    <source>
        <dbReference type="SAM" id="MobiDB-lite"/>
    </source>
</evidence>
<evidence type="ECO:0000269" key="3">
    <source>
    </source>
</evidence>
<evidence type="ECO:0000269" key="4">
    <source>
    </source>
</evidence>
<evidence type="ECO:0000269" key="5">
    <source>
    </source>
</evidence>
<evidence type="ECO:0000305" key="6"/>
<dbReference type="EMBL" id="CP017623">
    <property type="protein sequence ID" value="AOW25760.1"/>
    <property type="molecule type" value="Genomic_DNA"/>
</dbReference>
<dbReference type="RefSeq" id="XP_719006.1">
    <property type="nucleotide sequence ID" value="XM_713913.1"/>
</dbReference>
<dbReference type="SMR" id="Q5ABC6"/>
<dbReference type="BioGRID" id="1222475">
    <property type="interactions" value="2"/>
</dbReference>
<dbReference type="FunCoup" id="Q5ABC6">
    <property type="interactions" value="128"/>
</dbReference>
<dbReference type="STRING" id="237561.Q5ABC6"/>
<dbReference type="iPTMnet" id="Q5ABC6"/>
<dbReference type="EnsemblFungi" id="C1_00620W_A-T">
    <property type="protein sequence ID" value="C1_00620W_A-T-p1"/>
    <property type="gene ID" value="C1_00620W_A"/>
</dbReference>
<dbReference type="GeneID" id="3639381"/>
<dbReference type="KEGG" id="cal:CAALFM_C100620WA"/>
<dbReference type="CGD" id="CAL0000186024">
    <property type="gene designation" value="MOB2"/>
</dbReference>
<dbReference type="VEuPathDB" id="FungiDB:C1_00620W_A"/>
<dbReference type="eggNOG" id="KOG0440">
    <property type="taxonomic scope" value="Eukaryota"/>
</dbReference>
<dbReference type="HOGENOM" id="CLU_038321_2_1_1"/>
<dbReference type="InParanoid" id="Q5ABC6"/>
<dbReference type="OMA" id="CNHSSER"/>
<dbReference type="OrthoDB" id="10261121at2759"/>
<dbReference type="PRO" id="PR:Q5ABC6"/>
<dbReference type="Proteomes" id="UP000000559">
    <property type="component" value="Chromosome 1"/>
</dbReference>
<dbReference type="GO" id="GO:0005938">
    <property type="term" value="C:cell cortex"/>
    <property type="evidence" value="ECO:0000314"/>
    <property type="project" value="CGD"/>
</dbReference>
<dbReference type="GO" id="GO:0032153">
    <property type="term" value="C:cell division site"/>
    <property type="evidence" value="ECO:0007669"/>
    <property type="project" value="EnsemblFungi"/>
</dbReference>
<dbReference type="GO" id="GO:0030428">
    <property type="term" value="C:cell septum"/>
    <property type="evidence" value="ECO:0000314"/>
    <property type="project" value="CGD"/>
</dbReference>
<dbReference type="GO" id="GO:0005935">
    <property type="term" value="C:cellular bud neck"/>
    <property type="evidence" value="ECO:0000314"/>
    <property type="project" value="CGD"/>
</dbReference>
<dbReference type="GO" id="GO:0005934">
    <property type="term" value="C:cellular bud tip"/>
    <property type="evidence" value="ECO:0007669"/>
    <property type="project" value="EnsemblFungi"/>
</dbReference>
<dbReference type="GO" id="GO:0005737">
    <property type="term" value="C:cytoplasm"/>
    <property type="evidence" value="ECO:0000318"/>
    <property type="project" value="GO_Central"/>
</dbReference>
<dbReference type="GO" id="GO:0001411">
    <property type="term" value="C:hyphal tip"/>
    <property type="evidence" value="ECO:0000314"/>
    <property type="project" value="CGD"/>
</dbReference>
<dbReference type="GO" id="GO:0043332">
    <property type="term" value="C:mating projection tip"/>
    <property type="evidence" value="ECO:0007669"/>
    <property type="project" value="EnsemblFungi"/>
</dbReference>
<dbReference type="GO" id="GO:0005634">
    <property type="term" value="C:nucleus"/>
    <property type="evidence" value="ECO:0000318"/>
    <property type="project" value="GO_Central"/>
</dbReference>
<dbReference type="GO" id="GO:1902554">
    <property type="term" value="C:serine/threonine protein kinase complex"/>
    <property type="evidence" value="ECO:0007669"/>
    <property type="project" value="EnsemblFungi"/>
</dbReference>
<dbReference type="GO" id="GO:0030295">
    <property type="term" value="F:protein kinase activator activity"/>
    <property type="evidence" value="ECO:0000316"/>
    <property type="project" value="CGD"/>
</dbReference>
<dbReference type="GO" id="GO:0004672">
    <property type="term" value="F:protein kinase activity"/>
    <property type="evidence" value="ECO:0000315"/>
    <property type="project" value="CGD"/>
</dbReference>
<dbReference type="GO" id="GO:0007118">
    <property type="term" value="P:budding cell apical bud growth"/>
    <property type="evidence" value="ECO:0007669"/>
    <property type="project" value="EnsemblFungi"/>
</dbReference>
<dbReference type="GO" id="GO:0051301">
    <property type="term" value="P:cell division"/>
    <property type="evidence" value="ECO:0000318"/>
    <property type="project" value="GO_Central"/>
</dbReference>
<dbReference type="GO" id="GO:0036244">
    <property type="term" value="P:cellular response to neutral pH"/>
    <property type="evidence" value="ECO:0000315"/>
    <property type="project" value="CGD"/>
</dbReference>
<dbReference type="GO" id="GO:0009267">
    <property type="term" value="P:cellular response to starvation"/>
    <property type="evidence" value="ECO:0000315"/>
    <property type="project" value="CGD"/>
</dbReference>
<dbReference type="GO" id="GO:0030866">
    <property type="term" value="P:cortical actin cytoskeleton organization"/>
    <property type="evidence" value="ECO:0000315"/>
    <property type="project" value="CGD"/>
</dbReference>
<dbReference type="GO" id="GO:0007163">
    <property type="term" value="P:establishment or maintenance of cell polarity"/>
    <property type="evidence" value="ECO:0000315"/>
    <property type="project" value="CGD"/>
</dbReference>
<dbReference type="GO" id="GO:0030447">
    <property type="term" value="P:filamentous growth"/>
    <property type="evidence" value="ECO:0000315"/>
    <property type="project" value="CGD"/>
</dbReference>
<dbReference type="GO" id="GO:0036180">
    <property type="term" value="P:filamentous growth of a population of unicellular organisms in response to biotic stimulus"/>
    <property type="evidence" value="ECO:0000315"/>
    <property type="project" value="CGD"/>
</dbReference>
<dbReference type="GO" id="GO:0036178">
    <property type="term" value="P:filamentous growth of a population of unicellular organisms in response to neutral pH"/>
    <property type="evidence" value="ECO:0000315"/>
    <property type="project" value="CGD"/>
</dbReference>
<dbReference type="GO" id="GO:0036170">
    <property type="term" value="P:filamentous growth of a population of unicellular organisms in response to starvation"/>
    <property type="evidence" value="ECO:0000315"/>
    <property type="project" value="CGD"/>
</dbReference>
<dbReference type="GO" id="GO:0031505">
    <property type="term" value="P:fungal-type cell wall organization"/>
    <property type="evidence" value="ECO:0000315"/>
    <property type="project" value="CGD"/>
</dbReference>
<dbReference type="GO" id="GO:0030448">
    <property type="term" value="P:hyphal growth"/>
    <property type="evidence" value="ECO:0000315"/>
    <property type="project" value="CGD"/>
</dbReference>
<dbReference type="GO" id="GO:0031579">
    <property type="term" value="P:membrane raft organization"/>
    <property type="evidence" value="ECO:0000315"/>
    <property type="project" value="CGD"/>
</dbReference>
<dbReference type="GO" id="GO:0090033">
    <property type="term" value="P:positive regulation of filamentous growth"/>
    <property type="evidence" value="ECO:0000315"/>
    <property type="project" value="CGD"/>
</dbReference>
<dbReference type="GO" id="GO:1900445">
    <property type="term" value="P:positive regulation of filamentous growth of a population of unicellular organisms in response to biotic stimulus"/>
    <property type="evidence" value="ECO:0000315"/>
    <property type="project" value="CGD"/>
</dbReference>
<dbReference type="GO" id="GO:1900233">
    <property type="term" value="P:positive regulation of single-species biofilm formation on inanimate substrate"/>
    <property type="evidence" value="ECO:0000315"/>
    <property type="project" value="CGD"/>
</dbReference>
<dbReference type="GO" id="GO:0062200">
    <property type="term" value="P:RAM/MOR signaling"/>
    <property type="evidence" value="ECO:0007669"/>
    <property type="project" value="EnsemblFungi"/>
</dbReference>
<dbReference type="GO" id="GO:2000100">
    <property type="term" value="P:regulation of establishment or maintenance of bipolar cell polarity regulating cell shape"/>
    <property type="evidence" value="ECO:0007669"/>
    <property type="project" value="EnsemblFungi"/>
</dbReference>
<dbReference type="GO" id="GO:0000920">
    <property type="term" value="P:septum digestion after cytokinesis"/>
    <property type="evidence" value="ECO:0000315"/>
    <property type="project" value="CGD"/>
</dbReference>
<dbReference type="GO" id="GO:0007165">
    <property type="term" value="P:signal transduction"/>
    <property type="evidence" value="ECO:0000318"/>
    <property type="project" value="GO_Central"/>
</dbReference>
<dbReference type="GO" id="GO:0044011">
    <property type="term" value="P:single-species biofilm formation on inanimate substrate"/>
    <property type="evidence" value="ECO:0000315"/>
    <property type="project" value="CGD"/>
</dbReference>
<dbReference type="FunFam" id="1.20.140.30:FF:000004">
    <property type="entry name" value="CBK1 kinase activator protein MOB2"/>
    <property type="match status" value="1"/>
</dbReference>
<dbReference type="Gene3D" id="1.20.140.30">
    <property type="entry name" value="MOB kinase activator"/>
    <property type="match status" value="1"/>
</dbReference>
<dbReference type="InterPro" id="IPR005301">
    <property type="entry name" value="MOB_kinase_act_fam"/>
</dbReference>
<dbReference type="InterPro" id="IPR036703">
    <property type="entry name" value="MOB_kinase_act_sf"/>
</dbReference>
<dbReference type="PANTHER" id="PTHR22599">
    <property type="entry name" value="MPS ONE BINDER KINASE ACTIVATOR-LIKE MOB"/>
    <property type="match status" value="1"/>
</dbReference>
<dbReference type="Pfam" id="PF03637">
    <property type="entry name" value="Mob1_phocein"/>
    <property type="match status" value="1"/>
</dbReference>
<dbReference type="SMART" id="SM01388">
    <property type="entry name" value="Mob1_phocein"/>
    <property type="match status" value="1"/>
</dbReference>
<dbReference type="SUPFAM" id="SSF101152">
    <property type="entry name" value="Mob1/phocein"/>
    <property type="match status" value="1"/>
</dbReference>